<dbReference type="EMBL" id="CU329671">
    <property type="protein sequence ID" value="CAB39365.1"/>
    <property type="molecule type" value="Genomic_DNA"/>
</dbReference>
<dbReference type="PIR" id="T40639">
    <property type="entry name" value="T40639"/>
</dbReference>
<dbReference type="RefSeq" id="NP_596142.1">
    <property type="nucleotide sequence ID" value="NM_001022060.2"/>
</dbReference>
<dbReference type="SMR" id="Q9Y7L9"/>
<dbReference type="STRING" id="284812.Q9Y7L9"/>
<dbReference type="iPTMnet" id="Q9Y7L9"/>
<dbReference type="PaxDb" id="4896-SPBC685.08.1"/>
<dbReference type="EnsemblFungi" id="SPBC685.08.1">
    <property type="protein sequence ID" value="SPBC685.08.1:pep"/>
    <property type="gene ID" value="SPBC685.08"/>
</dbReference>
<dbReference type="KEGG" id="spo:2541091"/>
<dbReference type="PomBase" id="SPBC685.08"/>
<dbReference type="VEuPathDB" id="FungiDB:SPBC685.08"/>
<dbReference type="HOGENOM" id="CLU_2360953_0_0_1"/>
<dbReference type="InParanoid" id="Q9Y7L9"/>
<dbReference type="OMA" id="WVAMEND"/>
<dbReference type="PRO" id="PR:Q9Y7L9"/>
<dbReference type="Proteomes" id="UP000002485">
    <property type="component" value="Chromosome II"/>
</dbReference>
<dbReference type="GO" id="GO:0005829">
    <property type="term" value="C:cytosol"/>
    <property type="evidence" value="ECO:0007005"/>
    <property type="project" value="PomBase"/>
</dbReference>
<dbReference type="GO" id="GO:0005634">
    <property type="term" value="C:nucleus"/>
    <property type="evidence" value="ECO:0007005"/>
    <property type="project" value="PomBase"/>
</dbReference>
<keyword id="KW-1185">Reference proteome</keyword>
<proteinExistence type="predicted"/>
<organism>
    <name type="scientific">Schizosaccharomyces pombe (strain 972 / ATCC 24843)</name>
    <name type="common">Fission yeast</name>
    <dbReference type="NCBI Taxonomy" id="284812"/>
    <lineage>
        <taxon>Eukaryota</taxon>
        <taxon>Fungi</taxon>
        <taxon>Dikarya</taxon>
        <taxon>Ascomycota</taxon>
        <taxon>Taphrinomycotina</taxon>
        <taxon>Schizosaccharomycetes</taxon>
        <taxon>Schizosaccharomycetales</taxon>
        <taxon>Schizosaccharomycetaceae</taxon>
        <taxon>Schizosaccharomyces</taxon>
    </lineage>
</organism>
<sequence length="97" mass="10962">MVLVKFKREKLTVMLEVQPGLSVYDAVKLLKSALNLPPDSILRIGSFEQNDWVAMENDALSKTIITNNTEYAFAEGEEPLLVEKPKDYDDMSEEISP</sequence>
<feature type="chain" id="PRO_0000116759" description="Uncharacterized protein C685.08">
    <location>
        <begin position="1"/>
        <end position="97"/>
    </location>
</feature>
<gene>
    <name type="ORF">SPBC685.08</name>
</gene>
<protein>
    <recommendedName>
        <fullName>Uncharacterized protein C685.08</fullName>
    </recommendedName>
</protein>
<name>YGJ8_SCHPO</name>
<accession>Q9Y7L9</accession>
<reference key="1">
    <citation type="journal article" date="2002" name="Nature">
        <title>The genome sequence of Schizosaccharomyces pombe.</title>
        <authorList>
            <person name="Wood V."/>
            <person name="Gwilliam R."/>
            <person name="Rajandream M.A."/>
            <person name="Lyne M.H."/>
            <person name="Lyne R."/>
            <person name="Stewart A."/>
            <person name="Sgouros J.G."/>
            <person name="Peat N."/>
            <person name="Hayles J."/>
            <person name="Baker S.G."/>
            <person name="Basham D."/>
            <person name="Bowman S."/>
            <person name="Brooks K."/>
            <person name="Brown D."/>
            <person name="Brown S."/>
            <person name="Chillingworth T."/>
            <person name="Churcher C.M."/>
            <person name="Collins M."/>
            <person name="Connor R."/>
            <person name="Cronin A."/>
            <person name="Davis P."/>
            <person name="Feltwell T."/>
            <person name="Fraser A."/>
            <person name="Gentles S."/>
            <person name="Goble A."/>
            <person name="Hamlin N."/>
            <person name="Harris D.E."/>
            <person name="Hidalgo J."/>
            <person name="Hodgson G."/>
            <person name="Holroyd S."/>
            <person name="Hornsby T."/>
            <person name="Howarth S."/>
            <person name="Huckle E.J."/>
            <person name="Hunt S."/>
            <person name="Jagels K."/>
            <person name="James K.D."/>
            <person name="Jones L."/>
            <person name="Jones M."/>
            <person name="Leather S."/>
            <person name="McDonald S."/>
            <person name="McLean J."/>
            <person name="Mooney P."/>
            <person name="Moule S."/>
            <person name="Mungall K.L."/>
            <person name="Murphy L.D."/>
            <person name="Niblett D."/>
            <person name="Odell C."/>
            <person name="Oliver K."/>
            <person name="O'Neil S."/>
            <person name="Pearson D."/>
            <person name="Quail M.A."/>
            <person name="Rabbinowitsch E."/>
            <person name="Rutherford K.M."/>
            <person name="Rutter S."/>
            <person name="Saunders D."/>
            <person name="Seeger K."/>
            <person name="Sharp S."/>
            <person name="Skelton J."/>
            <person name="Simmonds M.N."/>
            <person name="Squares R."/>
            <person name="Squares S."/>
            <person name="Stevens K."/>
            <person name="Taylor K."/>
            <person name="Taylor R.G."/>
            <person name="Tivey A."/>
            <person name="Walsh S.V."/>
            <person name="Warren T."/>
            <person name="Whitehead S."/>
            <person name="Woodward J.R."/>
            <person name="Volckaert G."/>
            <person name="Aert R."/>
            <person name="Robben J."/>
            <person name="Grymonprez B."/>
            <person name="Weltjens I."/>
            <person name="Vanstreels E."/>
            <person name="Rieger M."/>
            <person name="Schaefer M."/>
            <person name="Mueller-Auer S."/>
            <person name="Gabel C."/>
            <person name="Fuchs M."/>
            <person name="Duesterhoeft A."/>
            <person name="Fritzc C."/>
            <person name="Holzer E."/>
            <person name="Moestl D."/>
            <person name="Hilbert H."/>
            <person name="Borzym K."/>
            <person name="Langer I."/>
            <person name="Beck A."/>
            <person name="Lehrach H."/>
            <person name="Reinhardt R."/>
            <person name="Pohl T.M."/>
            <person name="Eger P."/>
            <person name="Zimmermann W."/>
            <person name="Wedler H."/>
            <person name="Wambutt R."/>
            <person name="Purnelle B."/>
            <person name="Goffeau A."/>
            <person name="Cadieu E."/>
            <person name="Dreano S."/>
            <person name="Gloux S."/>
            <person name="Lelaure V."/>
            <person name="Mottier S."/>
            <person name="Galibert F."/>
            <person name="Aves S.J."/>
            <person name="Xiang Z."/>
            <person name="Hunt C."/>
            <person name="Moore K."/>
            <person name="Hurst S.M."/>
            <person name="Lucas M."/>
            <person name="Rochet M."/>
            <person name="Gaillardin C."/>
            <person name="Tallada V.A."/>
            <person name="Garzon A."/>
            <person name="Thode G."/>
            <person name="Daga R.R."/>
            <person name="Cruzado L."/>
            <person name="Jimenez J."/>
            <person name="Sanchez M."/>
            <person name="del Rey F."/>
            <person name="Benito J."/>
            <person name="Dominguez A."/>
            <person name="Revuelta J.L."/>
            <person name="Moreno S."/>
            <person name="Armstrong J."/>
            <person name="Forsburg S.L."/>
            <person name="Cerutti L."/>
            <person name="Lowe T."/>
            <person name="McCombie W.R."/>
            <person name="Paulsen I."/>
            <person name="Potashkin J."/>
            <person name="Shpakovski G.V."/>
            <person name="Ussery D."/>
            <person name="Barrell B.G."/>
            <person name="Nurse P."/>
        </authorList>
    </citation>
    <scope>NUCLEOTIDE SEQUENCE [LARGE SCALE GENOMIC DNA]</scope>
    <source>
        <strain>972 / ATCC 24843</strain>
    </source>
</reference>